<dbReference type="EMBL" id="DQ673255">
    <property type="protein sequence ID" value="ABG74671.1"/>
    <property type="molecule type" value="Genomic_DNA"/>
</dbReference>
<dbReference type="EMBL" id="DQ673255">
    <property type="protein sequence ID" value="ABG74691.1"/>
    <property type="molecule type" value="Genomic_DNA"/>
</dbReference>
<dbReference type="GO" id="GO:0009507">
    <property type="term" value="C:chloroplast"/>
    <property type="evidence" value="ECO:0007669"/>
    <property type="project" value="UniProtKB-SubCell"/>
</dbReference>
<dbReference type="InterPro" id="IPR019645">
    <property type="entry name" value="Uncharacterised_Ycf15"/>
</dbReference>
<dbReference type="Pfam" id="PF10705">
    <property type="entry name" value="Ycf15"/>
    <property type="match status" value="1"/>
</dbReference>
<geneLocation type="chloroplast"/>
<gene>
    <name type="primary">ycf15-A</name>
    <name type="ORF">JNC1013</name>
</gene>
<gene>
    <name type="primary">ycf15-B</name>
    <name type="ORF">JNC1565</name>
</gene>
<comment type="subcellular location">
    <subcellularLocation>
        <location>Plastid</location>
        <location>Chloroplast</location>
    </subcellularLocation>
</comment>
<comment type="similarity">
    <text evidence="1">Belongs to the ycf15 family.</text>
</comment>
<comment type="caution">
    <text evidence="1">Could be the product of a pseudogene.</text>
</comment>
<protein>
    <recommendedName>
        <fullName>Putative uncharacterized protein ycf15</fullName>
    </recommendedName>
</protein>
<proteinExistence type="uncertain"/>
<accession>Q06R69</accession>
<reference key="1">
    <citation type="journal article" date="2007" name="Mol. Biol. Evol.">
        <title>Gene relocations within chloroplast genomes of Jasminum and Menodora (Oleaceae) are due to multiple, overlapping inversions.</title>
        <authorList>
            <person name="Lee H.-L."/>
            <person name="Jansen R.K."/>
            <person name="Chumley T.W."/>
            <person name="Kim K.-J."/>
        </authorList>
    </citation>
    <scope>NUCLEOTIDE SEQUENCE [LARGE SCALE GENOMIC DNA]</scope>
</reference>
<evidence type="ECO:0000305" key="1"/>
<name>YCF15_JASNU</name>
<feature type="chain" id="PRO_0000299585" description="Putative uncharacterized protein ycf15">
    <location>
        <begin position="1"/>
        <end position="49"/>
    </location>
</feature>
<sequence length="49" mass="5960">MYGWYELPKQEFLNSEQPVQIFTTKKYQILFRIGPERRRKAGMPTGVYY</sequence>
<organism>
    <name type="scientific">Jasminum nudiflorum</name>
    <name type="common">Winter jasmine</name>
    <dbReference type="NCBI Taxonomy" id="126431"/>
    <lineage>
        <taxon>Eukaryota</taxon>
        <taxon>Viridiplantae</taxon>
        <taxon>Streptophyta</taxon>
        <taxon>Embryophyta</taxon>
        <taxon>Tracheophyta</taxon>
        <taxon>Spermatophyta</taxon>
        <taxon>Magnoliopsida</taxon>
        <taxon>eudicotyledons</taxon>
        <taxon>Gunneridae</taxon>
        <taxon>Pentapetalae</taxon>
        <taxon>asterids</taxon>
        <taxon>lamiids</taxon>
        <taxon>Lamiales</taxon>
        <taxon>Oleaceae</taxon>
        <taxon>Jasmineae</taxon>
        <taxon>Jasminum</taxon>
    </lineage>
</organism>
<keyword id="KW-0150">Chloroplast</keyword>
<keyword id="KW-0934">Plastid</keyword>